<dbReference type="EMBL" id="AY653733">
    <property type="protein sequence ID" value="AAV50897.1"/>
    <property type="molecule type" value="Genomic_DNA"/>
</dbReference>
<dbReference type="SMR" id="Q5UR85"/>
<dbReference type="KEGG" id="vg:9925280"/>
<dbReference type="Proteomes" id="UP000001134">
    <property type="component" value="Genome"/>
</dbReference>
<dbReference type="Gene3D" id="3.80.10.10">
    <property type="entry name" value="Ribonuclease Inhibitor"/>
    <property type="match status" value="1"/>
</dbReference>
<dbReference type="InterPro" id="IPR008615">
    <property type="entry name" value="FNIP"/>
</dbReference>
<dbReference type="InterPro" id="IPR032675">
    <property type="entry name" value="LRR_dom_sf"/>
</dbReference>
<dbReference type="InterPro" id="IPR051251">
    <property type="entry name" value="STK_FNIP-Repeat"/>
</dbReference>
<dbReference type="PANTHER" id="PTHR32134">
    <property type="entry name" value="FNIP REPEAT-CONTAINING PROTEIN"/>
    <property type="match status" value="1"/>
</dbReference>
<dbReference type="PANTHER" id="PTHR32134:SF92">
    <property type="entry name" value="FNIP REPEAT-CONTAINING PROTEIN"/>
    <property type="match status" value="1"/>
</dbReference>
<dbReference type="Pfam" id="PF05725">
    <property type="entry name" value="FNIP"/>
    <property type="match status" value="3"/>
</dbReference>
<dbReference type="SUPFAM" id="SSF52058">
    <property type="entry name" value="L domain-like"/>
    <property type="match status" value="1"/>
</dbReference>
<feature type="chain" id="PRO_0000071300" description="Putative FNIP repeat-containing protein R636">
    <location>
        <begin position="1"/>
        <end position="394"/>
    </location>
</feature>
<feature type="repeat" description="FNIP 1">
    <location>
        <begin position="126"/>
        <end position="167"/>
    </location>
</feature>
<feature type="repeat" description="FNIP 2">
    <location>
        <begin position="168"/>
        <end position="207"/>
    </location>
</feature>
<feature type="repeat" description="FNIP 3">
    <location>
        <begin position="210"/>
        <end position="250"/>
    </location>
</feature>
<organism>
    <name type="scientific">Acanthamoeba polyphaga mimivirus</name>
    <name type="common">APMV</name>
    <dbReference type="NCBI Taxonomy" id="212035"/>
    <lineage>
        <taxon>Viruses</taxon>
        <taxon>Varidnaviria</taxon>
        <taxon>Bamfordvirae</taxon>
        <taxon>Nucleocytoviricota</taxon>
        <taxon>Megaviricetes</taxon>
        <taxon>Imitervirales</taxon>
        <taxon>Mimiviridae</taxon>
        <taxon>Megamimivirinae</taxon>
        <taxon>Mimivirus</taxon>
        <taxon>Mimivirus bradfordmassiliense</taxon>
    </lineage>
</organism>
<name>YR636_MIMIV</name>
<gene>
    <name type="ordered locus">MIMI_R636</name>
</gene>
<accession>Q5UR85</accession>
<keyword id="KW-1185">Reference proteome</keyword>
<keyword id="KW-0677">Repeat</keyword>
<reference key="1">
    <citation type="journal article" date="2004" name="Science">
        <title>The 1.2-megabase genome sequence of Mimivirus.</title>
        <authorList>
            <person name="Raoult D."/>
            <person name="Audic S."/>
            <person name="Robert C."/>
            <person name="Abergel C."/>
            <person name="Renesto P."/>
            <person name="Ogata H."/>
            <person name="La Scola B."/>
            <person name="Susan M."/>
            <person name="Claverie J.-M."/>
        </authorList>
    </citation>
    <scope>NUCLEOTIDE SEQUENCE [LARGE SCALE GENOMIC DNA]</scope>
    <source>
        <strain>Rowbotham-Bradford</strain>
    </source>
</reference>
<sequence>MIDHFIMNKLPLELVYYLTNWLKDYDKRMLLSTCKNFLSLQSCVYYEDIYYYEEIHKLSYHQMFRKVELELCKFKTPIPKIVTNLEFDVYFNEPLINRRIKIRNKWVKIRKIIPSTVKYLDMGYSFNKSIRGALSYGLTTLIFGPEFNQPIDNYIPQTVTYLEFSVYFDQPVVGYLPTRLTHLIFGTDFNQPIKGALPDTLEYLYFGWAFNQPIDFALPPNLKCLKFGHCFDQPIKGFLPLGLEKLIFEAEYHQPMDLAIPESVEYLKLGNPGSNSLENCLPINLKTLVFGENFNENLNTLSLDKFRELEKIEFDGFFDQKISSRITIDNVIKSNNFIETFQNFYGMIKYYFNDFINPNRQYLPENVKHIIISTYLYDKICSNISNDVFIEVYN</sequence>
<proteinExistence type="predicted"/>
<organismHost>
    <name type="scientific">Acanthamoeba polyphaga</name>
    <name type="common">Amoeba</name>
    <dbReference type="NCBI Taxonomy" id="5757"/>
</organismHost>
<protein>
    <recommendedName>
        <fullName>Putative FNIP repeat-containing protein R636</fullName>
    </recommendedName>
</protein>